<comment type="catalytic activity">
    <reaction evidence="1">
        <text>(S)-4-amino-5-oxopentanoate = 5-aminolevulinate</text>
        <dbReference type="Rhea" id="RHEA:14265"/>
        <dbReference type="ChEBI" id="CHEBI:57501"/>
        <dbReference type="ChEBI" id="CHEBI:356416"/>
        <dbReference type="EC" id="5.4.3.8"/>
    </reaction>
</comment>
<comment type="cofactor">
    <cofactor evidence="1">
        <name>pyridoxal 5'-phosphate</name>
        <dbReference type="ChEBI" id="CHEBI:597326"/>
    </cofactor>
</comment>
<comment type="pathway">
    <text evidence="1">Porphyrin-containing compound metabolism; protoporphyrin-IX biosynthesis; 5-aminolevulinate from L-glutamyl-tRNA(Glu): step 2/2.</text>
</comment>
<comment type="pathway">
    <text evidence="1">Porphyrin-containing compound metabolism; chlorophyll biosynthesis.</text>
</comment>
<comment type="subunit">
    <text evidence="1">Homodimer.</text>
</comment>
<comment type="subcellular location">
    <subcellularLocation>
        <location evidence="1">Cytoplasm</location>
    </subcellularLocation>
</comment>
<comment type="similarity">
    <text evidence="1">Belongs to the class-III pyridoxal-phosphate-dependent aminotransferase family. HemL subfamily.</text>
</comment>
<feature type="chain" id="PRO_0000243562" description="Glutamate-1-semialdehyde 2,1-aminomutase">
    <location>
        <begin position="1"/>
        <end position="431"/>
    </location>
</feature>
<feature type="modified residue" description="N6-(pyridoxal phosphate)lysine" evidence="1">
    <location>
        <position position="269"/>
    </location>
</feature>
<accession>Q8KAQ7</accession>
<proteinExistence type="inferred from homology"/>
<protein>
    <recommendedName>
        <fullName evidence="1">Glutamate-1-semialdehyde 2,1-aminomutase</fullName>
        <shortName evidence="1">GSA</shortName>
        <ecNumber evidence="1">5.4.3.8</ecNumber>
    </recommendedName>
    <alternativeName>
        <fullName evidence="1">Glutamate-1-semialdehyde aminotransferase</fullName>
        <shortName evidence="1">GSA-AT</shortName>
    </alternativeName>
</protein>
<dbReference type="EC" id="5.4.3.8" evidence="1"/>
<dbReference type="EMBL" id="AE006470">
    <property type="protein sequence ID" value="AAM73315.1"/>
    <property type="molecule type" value="Genomic_DNA"/>
</dbReference>
<dbReference type="RefSeq" id="NP_662973.1">
    <property type="nucleotide sequence ID" value="NC_002932.3"/>
</dbReference>
<dbReference type="RefSeq" id="WP_010933753.1">
    <property type="nucleotide sequence ID" value="NC_002932.3"/>
</dbReference>
<dbReference type="SMR" id="Q8KAQ7"/>
<dbReference type="STRING" id="194439.CT2099"/>
<dbReference type="EnsemblBacteria" id="AAM73315">
    <property type="protein sequence ID" value="AAM73315"/>
    <property type="gene ID" value="CT2099"/>
</dbReference>
<dbReference type="KEGG" id="cte:CT2099"/>
<dbReference type="PATRIC" id="fig|194439.7.peg.1903"/>
<dbReference type="eggNOG" id="COG0001">
    <property type="taxonomic scope" value="Bacteria"/>
</dbReference>
<dbReference type="HOGENOM" id="CLU_016922_1_5_10"/>
<dbReference type="OrthoDB" id="9807885at2"/>
<dbReference type="UniPathway" id="UPA00251">
    <property type="reaction ID" value="UER00317"/>
</dbReference>
<dbReference type="UniPathway" id="UPA00668"/>
<dbReference type="Proteomes" id="UP000001007">
    <property type="component" value="Chromosome"/>
</dbReference>
<dbReference type="GO" id="GO:0005737">
    <property type="term" value="C:cytoplasm"/>
    <property type="evidence" value="ECO:0007669"/>
    <property type="project" value="UniProtKB-SubCell"/>
</dbReference>
<dbReference type="GO" id="GO:0042286">
    <property type="term" value="F:glutamate-1-semialdehyde 2,1-aminomutase activity"/>
    <property type="evidence" value="ECO:0007669"/>
    <property type="project" value="UniProtKB-UniRule"/>
</dbReference>
<dbReference type="GO" id="GO:0030170">
    <property type="term" value="F:pyridoxal phosphate binding"/>
    <property type="evidence" value="ECO:0007669"/>
    <property type="project" value="InterPro"/>
</dbReference>
<dbReference type="GO" id="GO:0008483">
    <property type="term" value="F:transaminase activity"/>
    <property type="evidence" value="ECO:0007669"/>
    <property type="project" value="InterPro"/>
</dbReference>
<dbReference type="GO" id="GO:0015995">
    <property type="term" value="P:chlorophyll biosynthetic process"/>
    <property type="evidence" value="ECO:0007669"/>
    <property type="project" value="UniProtKB-UniRule"/>
</dbReference>
<dbReference type="GO" id="GO:0006782">
    <property type="term" value="P:protoporphyrinogen IX biosynthetic process"/>
    <property type="evidence" value="ECO:0007669"/>
    <property type="project" value="UniProtKB-UniRule"/>
</dbReference>
<dbReference type="CDD" id="cd00610">
    <property type="entry name" value="OAT_like"/>
    <property type="match status" value="1"/>
</dbReference>
<dbReference type="FunFam" id="3.40.640.10:FF:000021">
    <property type="entry name" value="Glutamate-1-semialdehyde 2,1-aminomutase"/>
    <property type="match status" value="1"/>
</dbReference>
<dbReference type="Gene3D" id="3.90.1150.10">
    <property type="entry name" value="Aspartate Aminotransferase, domain 1"/>
    <property type="match status" value="1"/>
</dbReference>
<dbReference type="Gene3D" id="3.40.640.10">
    <property type="entry name" value="Type I PLP-dependent aspartate aminotransferase-like (Major domain)"/>
    <property type="match status" value="1"/>
</dbReference>
<dbReference type="HAMAP" id="MF_00375">
    <property type="entry name" value="HemL_aminotrans_3"/>
    <property type="match status" value="1"/>
</dbReference>
<dbReference type="InterPro" id="IPR004639">
    <property type="entry name" value="4pyrrol_synth_GluAld_NH2Trfase"/>
</dbReference>
<dbReference type="InterPro" id="IPR005814">
    <property type="entry name" value="Aminotrans_3"/>
</dbReference>
<dbReference type="InterPro" id="IPR049704">
    <property type="entry name" value="Aminotrans_3_PPA_site"/>
</dbReference>
<dbReference type="InterPro" id="IPR015424">
    <property type="entry name" value="PyrdxlP-dep_Trfase"/>
</dbReference>
<dbReference type="InterPro" id="IPR015421">
    <property type="entry name" value="PyrdxlP-dep_Trfase_major"/>
</dbReference>
<dbReference type="InterPro" id="IPR015422">
    <property type="entry name" value="PyrdxlP-dep_Trfase_small"/>
</dbReference>
<dbReference type="NCBIfam" id="TIGR00713">
    <property type="entry name" value="hemL"/>
    <property type="match status" value="1"/>
</dbReference>
<dbReference type="NCBIfam" id="NF000818">
    <property type="entry name" value="PRK00062.1"/>
    <property type="match status" value="1"/>
</dbReference>
<dbReference type="PANTHER" id="PTHR43713">
    <property type="entry name" value="GLUTAMATE-1-SEMIALDEHYDE 2,1-AMINOMUTASE"/>
    <property type="match status" value="1"/>
</dbReference>
<dbReference type="PANTHER" id="PTHR43713:SF3">
    <property type="entry name" value="GLUTAMATE-1-SEMIALDEHYDE 2,1-AMINOMUTASE 1, CHLOROPLASTIC-RELATED"/>
    <property type="match status" value="1"/>
</dbReference>
<dbReference type="Pfam" id="PF00202">
    <property type="entry name" value="Aminotran_3"/>
    <property type="match status" value="1"/>
</dbReference>
<dbReference type="SUPFAM" id="SSF53383">
    <property type="entry name" value="PLP-dependent transferases"/>
    <property type="match status" value="1"/>
</dbReference>
<dbReference type="PROSITE" id="PS00600">
    <property type="entry name" value="AA_TRANSFER_CLASS_3"/>
    <property type="match status" value="1"/>
</dbReference>
<gene>
    <name evidence="1" type="primary">hemL</name>
    <name type="ordered locus">CT2099</name>
</gene>
<evidence type="ECO:0000255" key="1">
    <source>
        <dbReference type="HAMAP-Rule" id="MF_00375"/>
    </source>
</evidence>
<keyword id="KW-0149">Chlorophyll biosynthesis</keyword>
<keyword id="KW-0963">Cytoplasm</keyword>
<keyword id="KW-0413">Isomerase</keyword>
<keyword id="KW-0627">Porphyrin biosynthesis</keyword>
<keyword id="KW-0663">Pyridoxal phosphate</keyword>
<keyword id="KW-1185">Reference proteome</keyword>
<name>GSA_CHLTE</name>
<reference key="1">
    <citation type="journal article" date="2002" name="Proc. Natl. Acad. Sci. U.S.A.">
        <title>The complete genome sequence of Chlorobium tepidum TLS, a photosynthetic, anaerobic, green-sulfur bacterium.</title>
        <authorList>
            <person name="Eisen J.A."/>
            <person name="Nelson K.E."/>
            <person name="Paulsen I.T."/>
            <person name="Heidelberg J.F."/>
            <person name="Wu M."/>
            <person name="Dodson R.J."/>
            <person name="DeBoy R.T."/>
            <person name="Gwinn M.L."/>
            <person name="Nelson W.C."/>
            <person name="Haft D.H."/>
            <person name="Hickey E.K."/>
            <person name="Peterson J.D."/>
            <person name="Durkin A.S."/>
            <person name="Kolonay J.F."/>
            <person name="Yang F."/>
            <person name="Holt I.E."/>
            <person name="Umayam L.A."/>
            <person name="Mason T.M."/>
            <person name="Brenner M."/>
            <person name="Shea T.P."/>
            <person name="Parksey D.S."/>
            <person name="Nierman W.C."/>
            <person name="Feldblyum T.V."/>
            <person name="Hansen C.L."/>
            <person name="Craven M.B."/>
            <person name="Radune D."/>
            <person name="Vamathevan J.J."/>
            <person name="Khouri H.M."/>
            <person name="White O."/>
            <person name="Gruber T.M."/>
            <person name="Ketchum K.A."/>
            <person name="Venter J.C."/>
            <person name="Tettelin H."/>
            <person name="Bryant D.A."/>
            <person name="Fraser C.M."/>
        </authorList>
    </citation>
    <scope>NUCLEOTIDE SEQUENCE [LARGE SCALE GENOMIC DNA]</scope>
    <source>
        <strain>ATCC 49652 / DSM 12025 / NBRC 103806 / TLS</strain>
    </source>
</reference>
<organism>
    <name type="scientific">Chlorobaculum tepidum (strain ATCC 49652 / DSM 12025 / NBRC 103806 / TLS)</name>
    <name type="common">Chlorobium tepidum</name>
    <dbReference type="NCBI Taxonomy" id="194439"/>
    <lineage>
        <taxon>Bacteria</taxon>
        <taxon>Pseudomonadati</taxon>
        <taxon>Chlorobiota</taxon>
        <taxon>Chlorobiia</taxon>
        <taxon>Chlorobiales</taxon>
        <taxon>Chlorobiaceae</taxon>
        <taxon>Chlorobaculum</taxon>
    </lineage>
</organism>
<sequence length="431" mass="46183">MPVLTRSAELFEKAKKFIPGGVNSPVRAFKSVGGTPIYMAKGQGAYMTDVDGNTYLDYVGSWGPFILGSMHPRVTAAIEYTLRNIGTSFGTPIELEIEIAELLCKIVPSLEMVRMVNSGTEATMSAVRLARGYTGKDKIIKFEGCYHGHGDSFLIKAGSGVLTLGDPDSPGVTKGTANDTLNATYNDIESVKAIVNENKGQVAAIIIEPVAGNTGVIPAKKEFLVALRELCDAEGIVLIFDEVMCGFRVALGGAQELYGVTPDLTTMGKIIGGGLPVGAFGGKRHIMENIAPLGSVYQAGTLSGNPLALTAGLETLKILMEENPYPELERKAAFLEAGFKANMEKLGLNYTQNRVGSMACLFFTETPVVDYKSAITADTAKYGKYFHSMLDQGIYLAPSQFEAMFTSFAHTDEDLEKTVKANYNALVAATK</sequence>